<name>Y1357_DESA1</name>
<comment type="similarity">
    <text evidence="1">Belongs to the MEMO1 family.</text>
</comment>
<protein>
    <recommendedName>
        <fullName evidence="1">MEMO1 family protein DKAM_1357</fullName>
    </recommendedName>
</protein>
<organism>
    <name type="scientific">Desulfurococcus amylolyticus (strain DSM 18924 / JCM 16383 / VKM B-2413 / 1221n)</name>
    <name type="common">Desulfurococcus kamchatkensis</name>
    <dbReference type="NCBI Taxonomy" id="490899"/>
    <lineage>
        <taxon>Archaea</taxon>
        <taxon>Thermoproteota</taxon>
        <taxon>Thermoprotei</taxon>
        <taxon>Desulfurococcales</taxon>
        <taxon>Desulfurococcaceae</taxon>
        <taxon>Desulfurococcus</taxon>
    </lineage>
</organism>
<sequence>MKKRSPIVAGYFYPDKPGELRSVIEWSFKHGIGPGKPPSPSDIPATNSIGYVAPHAGYIYSGPVAAHVYFDMALNKKPDTIVILGTNHTGLGRPVSVYPEGVWETPLGDLVVDSEIGRLIVENSEIAEFDEYAHLEEHSIEVQLPFIVYIYGEDVKITPIVIGIHTPDIARDLAKSIYEASMSTGKRIIVIASSDFNHYEPHEETSRKDSMAIDRILKLDTDGLYNVILHNDISICGPGGIMTLMEYTKKLGGKAQLLKYATSGDTSGDYSHVVGYAALKFYI</sequence>
<gene>
    <name type="ordered locus">DKAM_1357</name>
</gene>
<dbReference type="EMBL" id="CP001140">
    <property type="protein sequence ID" value="ACL11683.1"/>
    <property type="molecule type" value="Genomic_DNA"/>
</dbReference>
<dbReference type="RefSeq" id="WP_012609024.1">
    <property type="nucleotide sequence ID" value="NC_011766.1"/>
</dbReference>
<dbReference type="SMR" id="B8D6F2"/>
<dbReference type="STRING" id="490899.DKAM_1357"/>
<dbReference type="GeneID" id="7171402"/>
<dbReference type="KEGG" id="dka:DKAM_1357"/>
<dbReference type="eggNOG" id="arCOG01728">
    <property type="taxonomic scope" value="Archaea"/>
</dbReference>
<dbReference type="HOGENOM" id="CLU_038085_2_0_2"/>
<dbReference type="Proteomes" id="UP000006903">
    <property type="component" value="Chromosome"/>
</dbReference>
<dbReference type="CDD" id="cd07361">
    <property type="entry name" value="MEMO_like"/>
    <property type="match status" value="1"/>
</dbReference>
<dbReference type="Gene3D" id="3.40.830.10">
    <property type="entry name" value="LigB-like"/>
    <property type="match status" value="1"/>
</dbReference>
<dbReference type="HAMAP" id="MF_00055">
    <property type="entry name" value="MEMO1"/>
    <property type="match status" value="1"/>
</dbReference>
<dbReference type="InterPro" id="IPR002737">
    <property type="entry name" value="MEMO1_fam"/>
</dbReference>
<dbReference type="NCBIfam" id="TIGR04336">
    <property type="entry name" value="AmmeMemoSam_B"/>
    <property type="match status" value="1"/>
</dbReference>
<dbReference type="NCBIfam" id="NF001987">
    <property type="entry name" value="PRK00782.1"/>
    <property type="match status" value="1"/>
</dbReference>
<dbReference type="PANTHER" id="PTHR11060">
    <property type="entry name" value="PROTEIN MEMO1"/>
    <property type="match status" value="1"/>
</dbReference>
<dbReference type="PANTHER" id="PTHR11060:SF0">
    <property type="entry name" value="PROTEIN MEMO1"/>
    <property type="match status" value="1"/>
</dbReference>
<dbReference type="Pfam" id="PF01875">
    <property type="entry name" value="Memo"/>
    <property type="match status" value="1"/>
</dbReference>
<dbReference type="SUPFAM" id="SSF53213">
    <property type="entry name" value="LigB-like"/>
    <property type="match status" value="1"/>
</dbReference>
<reference key="1">
    <citation type="journal article" date="2009" name="J. Bacteriol.">
        <title>Complete genome sequence of the anaerobic, protein-degrading hyperthermophilic crenarchaeon Desulfurococcus kamchatkensis.</title>
        <authorList>
            <person name="Ravin N.V."/>
            <person name="Mardanov A.V."/>
            <person name="Beletsky A.V."/>
            <person name="Kublanov I.V."/>
            <person name="Kolganova T.V."/>
            <person name="Lebedinsky A.V."/>
            <person name="Chernyh N.A."/>
            <person name="Bonch-Osmolovskaya E.A."/>
            <person name="Skryabin K.G."/>
        </authorList>
    </citation>
    <scope>NUCLEOTIDE SEQUENCE [LARGE SCALE GENOMIC DNA]</scope>
    <source>
        <strain>DSM 18924 / JCM 16383 / VKM B-2413 / 1221n</strain>
    </source>
</reference>
<feature type="chain" id="PRO_1000200165" description="MEMO1 family protein DKAM_1357">
    <location>
        <begin position="1"/>
        <end position="283"/>
    </location>
</feature>
<proteinExistence type="inferred from homology"/>
<accession>B8D6F2</accession>
<evidence type="ECO:0000255" key="1">
    <source>
        <dbReference type="HAMAP-Rule" id="MF_00055"/>
    </source>
</evidence>